<evidence type="ECO:0000255" key="1">
    <source>
        <dbReference type="HAMAP-Rule" id="MF_00064"/>
    </source>
</evidence>
<reference key="1">
    <citation type="journal article" date="2005" name="J. Bacteriol.">
        <title>Insights into genome plasticity and pathogenicity of the plant pathogenic Bacterium Xanthomonas campestris pv. vesicatoria revealed by the complete genome sequence.</title>
        <authorList>
            <person name="Thieme F."/>
            <person name="Koebnik R."/>
            <person name="Bekel T."/>
            <person name="Berger C."/>
            <person name="Boch J."/>
            <person name="Buettner D."/>
            <person name="Caldana C."/>
            <person name="Gaigalat L."/>
            <person name="Goesmann A."/>
            <person name="Kay S."/>
            <person name="Kirchner O."/>
            <person name="Lanz C."/>
            <person name="Linke B."/>
            <person name="McHardy A.C."/>
            <person name="Meyer F."/>
            <person name="Mittenhuber G."/>
            <person name="Nies D.H."/>
            <person name="Niesbach-Kloesgen U."/>
            <person name="Patschkowski T."/>
            <person name="Rueckert C."/>
            <person name="Rupp O."/>
            <person name="Schneiker S."/>
            <person name="Schuster S.C."/>
            <person name="Vorhoelter F.J."/>
            <person name="Weber E."/>
            <person name="Puehler A."/>
            <person name="Bonas U."/>
            <person name="Bartels D."/>
            <person name="Kaiser O."/>
        </authorList>
    </citation>
    <scope>NUCLEOTIDE SEQUENCE [LARGE SCALE GENOMIC DNA]</scope>
    <source>
        <strain>85-10</strain>
    </source>
</reference>
<name>CYSD_XANE5</name>
<comment type="function">
    <text evidence="1">With CysN forms the ATP sulfurylase (ATPS) that catalyzes the adenylation of sulfate producing adenosine 5'-phosphosulfate (APS) and diphosphate, the first enzymatic step in sulfur assimilation pathway. APS synthesis involves the formation of a high-energy phosphoric-sulfuric acid anhydride bond driven by GTP hydrolysis by CysN coupled to ATP hydrolysis by CysD.</text>
</comment>
<comment type="catalytic activity">
    <reaction evidence="1">
        <text>sulfate + ATP + H(+) = adenosine 5'-phosphosulfate + diphosphate</text>
        <dbReference type="Rhea" id="RHEA:18133"/>
        <dbReference type="ChEBI" id="CHEBI:15378"/>
        <dbReference type="ChEBI" id="CHEBI:16189"/>
        <dbReference type="ChEBI" id="CHEBI:30616"/>
        <dbReference type="ChEBI" id="CHEBI:33019"/>
        <dbReference type="ChEBI" id="CHEBI:58243"/>
        <dbReference type="EC" id="2.7.7.4"/>
    </reaction>
</comment>
<comment type="pathway">
    <text evidence="1">Sulfur metabolism; hydrogen sulfide biosynthesis; sulfite from sulfate: step 1/3.</text>
</comment>
<comment type="subunit">
    <text evidence="1">Heterodimer composed of CysD, the smaller subunit, and CysN.</text>
</comment>
<comment type="similarity">
    <text evidence="1">Belongs to the PAPS reductase family. CysD subfamily.</text>
</comment>
<sequence>MTLPPLSHLDRLEAESIHILREVAAEFRAPVMLYSVGKDSSVLLHLLLKAFAPSRPPIPLLHIDTRWKFREMIAFRDRRAAETGVDLRVHINPDGVAQDVGPISHGAAVHTDIMKTQGLKQALEHGGFDAAIGGARRDEEKSRAKERVFSFRTARHRWDPKNQRPELWNLYNARTGPGESVRVFPLSNWTELDIWLYIYREKIPVVPLYFAAPRPVVERDGAWIMVDDARLPLRPGETPQLRSVRFRTLGCYPLTGAIDSDADTLEAVIAEMLVSTSSERQGRMIDHAPGASMEQKKLEGYF</sequence>
<proteinExistence type="inferred from homology"/>
<dbReference type="EC" id="2.7.7.4" evidence="1"/>
<dbReference type="EMBL" id="AM039952">
    <property type="protein sequence ID" value="CAJ25177.1"/>
    <property type="molecule type" value="Genomic_DNA"/>
</dbReference>
<dbReference type="RefSeq" id="WP_011348410.1">
    <property type="nucleotide sequence ID" value="NZ_CP017190.1"/>
</dbReference>
<dbReference type="SMR" id="Q3BPY6"/>
<dbReference type="STRING" id="456327.BJD11_05505"/>
<dbReference type="GeneID" id="63992475"/>
<dbReference type="KEGG" id="xcv:XCV3446"/>
<dbReference type="eggNOG" id="COG0175">
    <property type="taxonomic scope" value="Bacteria"/>
</dbReference>
<dbReference type="HOGENOM" id="CLU_043026_0_0_6"/>
<dbReference type="UniPathway" id="UPA00140">
    <property type="reaction ID" value="UER00204"/>
</dbReference>
<dbReference type="Proteomes" id="UP000007069">
    <property type="component" value="Chromosome"/>
</dbReference>
<dbReference type="GO" id="GO:0005524">
    <property type="term" value="F:ATP binding"/>
    <property type="evidence" value="ECO:0007669"/>
    <property type="project" value="UniProtKB-KW"/>
</dbReference>
<dbReference type="GO" id="GO:0004781">
    <property type="term" value="F:sulfate adenylyltransferase (ATP) activity"/>
    <property type="evidence" value="ECO:0007669"/>
    <property type="project" value="UniProtKB-UniRule"/>
</dbReference>
<dbReference type="GO" id="GO:0070814">
    <property type="term" value="P:hydrogen sulfide biosynthetic process"/>
    <property type="evidence" value="ECO:0007669"/>
    <property type="project" value="UniProtKB-UniRule"/>
</dbReference>
<dbReference type="GO" id="GO:0000103">
    <property type="term" value="P:sulfate assimilation"/>
    <property type="evidence" value="ECO:0007669"/>
    <property type="project" value="UniProtKB-UniRule"/>
</dbReference>
<dbReference type="CDD" id="cd23946">
    <property type="entry name" value="Sulfate_adenylyltransferase_2"/>
    <property type="match status" value="1"/>
</dbReference>
<dbReference type="FunFam" id="3.40.50.620:FF:000002">
    <property type="entry name" value="Sulfate adenylyltransferase subunit 2"/>
    <property type="match status" value="1"/>
</dbReference>
<dbReference type="Gene3D" id="3.40.50.620">
    <property type="entry name" value="HUPs"/>
    <property type="match status" value="1"/>
</dbReference>
<dbReference type="HAMAP" id="MF_00064">
    <property type="entry name" value="Sulf_adenylyltr_sub2"/>
    <property type="match status" value="1"/>
</dbReference>
<dbReference type="InterPro" id="IPR002500">
    <property type="entry name" value="PAPS_reduct_dom"/>
</dbReference>
<dbReference type="InterPro" id="IPR014729">
    <property type="entry name" value="Rossmann-like_a/b/a_fold"/>
</dbReference>
<dbReference type="InterPro" id="IPR011784">
    <property type="entry name" value="SO4_adenylTrfase_ssu"/>
</dbReference>
<dbReference type="InterPro" id="IPR050128">
    <property type="entry name" value="Sulfate_adenylyltrnsfr_sub2"/>
</dbReference>
<dbReference type="NCBIfam" id="TIGR02039">
    <property type="entry name" value="CysD"/>
    <property type="match status" value="1"/>
</dbReference>
<dbReference type="NCBIfam" id="NF003587">
    <property type="entry name" value="PRK05253.1"/>
    <property type="match status" value="1"/>
</dbReference>
<dbReference type="NCBIfam" id="NF009214">
    <property type="entry name" value="PRK12563.1"/>
    <property type="match status" value="1"/>
</dbReference>
<dbReference type="PANTHER" id="PTHR43196">
    <property type="entry name" value="SULFATE ADENYLYLTRANSFERASE SUBUNIT 2"/>
    <property type="match status" value="1"/>
</dbReference>
<dbReference type="PANTHER" id="PTHR43196:SF1">
    <property type="entry name" value="SULFATE ADENYLYLTRANSFERASE SUBUNIT 2"/>
    <property type="match status" value="1"/>
</dbReference>
<dbReference type="Pfam" id="PF01507">
    <property type="entry name" value="PAPS_reduct"/>
    <property type="match status" value="1"/>
</dbReference>
<dbReference type="PIRSF" id="PIRSF002936">
    <property type="entry name" value="CysDAde_trans"/>
    <property type="match status" value="1"/>
</dbReference>
<dbReference type="SUPFAM" id="SSF52402">
    <property type="entry name" value="Adenine nucleotide alpha hydrolases-like"/>
    <property type="match status" value="1"/>
</dbReference>
<feature type="chain" id="PRO_0000340226" description="Sulfate adenylyltransferase subunit 2">
    <location>
        <begin position="1"/>
        <end position="302"/>
    </location>
</feature>
<organism>
    <name type="scientific">Xanthomonas euvesicatoria pv. vesicatoria (strain 85-10)</name>
    <name type="common">Xanthomonas campestris pv. vesicatoria</name>
    <dbReference type="NCBI Taxonomy" id="316273"/>
    <lineage>
        <taxon>Bacteria</taxon>
        <taxon>Pseudomonadati</taxon>
        <taxon>Pseudomonadota</taxon>
        <taxon>Gammaproteobacteria</taxon>
        <taxon>Lysobacterales</taxon>
        <taxon>Lysobacteraceae</taxon>
        <taxon>Xanthomonas</taxon>
    </lineage>
</organism>
<keyword id="KW-0067">ATP-binding</keyword>
<keyword id="KW-0547">Nucleotide-binding</keyword>
<keyword id="KW-0548">Nucleotidyltransferase</keyword>
<keyword id="KW-0808">Transferase</keyword>
<accession>Q3BPY6</accession>
<gene>
    <name evidence="1" type="primary">cysD</name>
    <name type="ordered locus">XCV3446</name>
</gene>
<protein>
    <recommendedName>
        <fullName evidence="1">Sulfate adenylyltransferase subunit 2</fullName>
        <ecNumber evidence="1">2.7.7.4</ecNumber>
    </recommendedName>
    <alternativeName>
        <fullName evidence="1">ATP-sulfurylase small subunit</fullName>
    </alternativeName>
    <alternativeName>
        <fullName evidence="1">Sulfate adenylate transferase</fullName>
        <shortName evidence="1">SAT</shortName>
    </alternativeName>
</protein>